<comment type="function">
    <text evidence="1">Catalyzes the NADPH-dependent reduction of 7-cyano-7-deazaguanine (preQ0) to 7-aminomethyl-7-deazaguanine (preQ1).</text>
</comment>
<comment type="catalytic activity">
    <reaction evidence="1">
        <text>7-aminomethyl-7-carbaguanine + 2 NADP(+) = 7-cyano-7-deazaguanine + 2 NADPH + 3 H(+)</text>
        <dbReference type="Rhea" id="RHEA:13409"/>
        <dbReference type="ChEBI" id="CHEBI:15378"/>
        <dbReference type="ChEBI" id="CHEBI:45075"/>
        <dbReference type="ChEBI" id="CHEBI:57783"/>
        <dbReference type="ChEBI" id="CHEBI:58349"/>
        <dbReference type="ChEBI" id="CHEBI:58703"/>
        <dbReference type="EC" id="1.7.1.13"/>
    </reaction>
</comment>
<comment type="pathway">
    <text evidence="1">tRNA modification; tRNA-queuosine biosynthesis.</text>
</comment>
<comment type="subcellular location">
    <subcellularLocation>
        <location evidence="1">Cytoplasm</location>
    </subcellularLocation>
</comment>
<comment type="similarity">
    <text evidence="1">Belongs to the GTP cyclohydrolase I family. QueF type 1 subfamily.</text>
</comment>
<organism>
    <name type="scientific">Alkaliphilus metalliredigens (strain QYMF)</name>
    <dbReference type="NCBI Taxonomy" id="293826"/>
    <lineage>
        <taxon>Bacteria</taxon>
        <taxon>Bacillati</taxon>
        <taxon>Bacillota</taxon>
        <taxon>Clostridia</taxon>
        <taxon>Peptostreptococcales</taxon>
        <taxon>Natronincolaceae</taxon>
        <taxon>Alkaliphilus</taxon>
    </lineage>
</organism>
<proteinExistence type="inferred from homology"/>
<reference key="1">
    <citation type="journal article" date="2016" name="Genome Announc.">
        <title>Complete genome sequence of Alkaliphilus metalliredigens strain QYMF, an alkaliphilic and metal-reducing bacterium isolated from borax-contaminated leachate ponds.</title>
        <authorList>
            <person name="Hwang C."/>
            <person name="Copeland A."/>
            <person name="Lucas S."/>
            <person name="Lapidus A."/>
            <person name="Barry K."/>
            <person name="Detter J.C."/>
            <person name="Glavina Del Rio T."/>
            <person name="Hammon N."/>
            <person name="Israni S."/>
            <person name="Dalin E."/>
            <person name="Tice H."/>
            <person name="Pitluck S."/>
            <person name="Chertkov O."/>
            <person name="Brettin T."/>
            <person name="Bruce D."/>
            <person name="Han C."/>
            <person name="Schmutz J."/>
            <person name="Larimer F."/>
            <person name="Land M.L."/>
            <person name="Hauser L."/>
            <person name="Kyrpides N."/>
            <person name="Mikhailova N."/>
            <person name="Ye Q."/>
            <person name="Zhou J."/>
            <person name="Richardson P."/>
            <person name="Fields M.W."/>
        </authorList>
    </citation>
    <scope>NUCLEOTIDE SEQUENCE [LARGE SCALE GENOMIC DNA]</scope>
    <source>
        <strain>QYMF</strain>
    </source>
</reference>
<dbReference type="EC" id="1.7.1.13" evidence="1"/>
<dbReference type="EMBL" id="CP000724">
    <property type="protein sequence ID" value="ABR50507.1"/>
    <property type="molecule type" value="Genomic_DNA"/>
</dbReference>
<dbReference type="SMR" id="A6TWD9"/>
<dbReference type="STRING" id="293826.Amet_4435"/>
<dbReference type="KEGG" id="amt:Amet_4435"/>
<dbReference type="eggNOG" id="COG0780">
    <property type="taxonomic scope" value="Bacteria"/>
</dbReference>
<dbReference type="HOGENOM" id="CLU_102489_0_1_9"/>
<dbReference type="UniPathway" id="UPA00392"/>
<dbReference type="Proteomes" id="UP000001572">
    <property type="component" value="Chromosome"/>
</dbReference>
<dbReference type="GO" id="GO:0005737">
    <property type="term" value="C:cytoplasm"/>
    <property type="evidence" value="ECO:0007669"/>
    <property type="project" value="UniProtKB-SubCell"/>
</dbReference>
<dbReference type="GO" id="GO:0033739">
    <property type="term" value="F:preQ1 synthase activity"/>
    <property type="evidence" value="ECO:0007669"/>
    <property type="project" value="UniProtKB-UniRule"/>
</dbReference>
<dbReference type="GO" id="GO:0008616">
    <property type="term" value="P:queuosine biosynthetic process"/>
    <property type="evidence" value="ECO:0007669"/>
    <property type="project" value="UniProtKB-UniRule"/>
</dbReference>
<dbReference type="GO" id="GO:0006400">
    <property type="term" value="P:tRNA modification"/>
    <property type="evidence" value="ECO:0007669"/>
    <property type="project" value="UniProtKB-UniRule"/>
</dbReference>
<dbReference type="Gene3D" id="3.30.1130.10">
    <property type="match status" value="1"/>
</dbReference>
<dbReference type="HAMAP" id="MF_00818">
    <property type="entry name" value="QueF_type1"/>
    <property type="match status" value="1"/>
</dbReference>
<dbReference type="InterPro" id="IPR043133">
    <property type="entry name" value="GTP-CH-I_C/QueF"/>
</dbReference>
<dbReference type="InterPro" id="IPR050084">
    <property type="entry name" value="NADPH_dep_7-cyano-7-deazaG_red"/>
</dbReference>
<dbReference type="InterPro" id="IPR029500">
    <property type="entry name" value="QueF"/>
</dbReference>
<dbReference type="InterPro" id="IPR016856">
    <property type="entry name" value="QueF_type1"/>
</dbReference>
<dbReference type="NCBIfam" id="TIGR03139">
    <property type="entry name" value="QueF-II"/>
    <property type="match status" value="1"/>
</dbReference>
<dbReference type="PANTHER" id="PTHR34354">
    <property type="entry name" value="NADPH-DEPENDENT 7-CYANO-7-DEAZAGUANINE REDUCTASE"/>
    <property type="match status" value="1"/>
</dbReference>
<dbReference type="PANTHER" id="PTHR34354:SF1">
    <property type="entry name" value="NADPH-DEPENDENT 7-CYANO-7-DEAZAGUANINE REDUCTASE"/>
    <property type="match status" value="1"/>
</dbReference>
<dbReference type="Pfam" id="PF14489">
    <property type="entry name" value="QueF"/>
    <property type="match status" value="1"/>
</dbReference>
<dbReference type="SUPFAM" id="SSF55620">
    <property type="entry name" value="Tetrahydrobiopterin biosynthesis enzymes-like"/>
    <property type="match status" value="1"/>
</dbReference>
<gene>
    <name evidence="1" type="primary">queF</name>
    <name type="ordered locus">Amet_4435</name>
</gene>
<sequence>MMSGRTDEELKGVTLLGNQSVKYQYQYNPDILESFGNKHPENDYFVKLNFPEFTSLCPKTGQPDFAAIYISYVPDKLLVESKSLKLYLFSFRNQGDFHEDCINIIMKDLIRLMDPKYIEVWGKFTPRGGISIDPYCNHGKKGTKWETMAEKRIQWHDMNPENINNR</sequence>
<accession>A6TWD9</accession>
<evidence type="ECO:0000255" key="1">
    <source>
        <dbReference type="HAMAP-Rule" id="MF_00818"/>
    </source>
</evidence>
<keyword id="KW-0963">Cytoplasm</keyword>
<keyword id="KW-0521">NADP</keyword>
<keyword id="KW-0560">Oxidoreductase</keyword>
<keyword id="KW-0671">Queuosine biosynthesis</keyword>
<keyword id="KW-1185">Reference proteome</keyword>
<protein>
    <recommendedName>
        <fullName evidence="1">NADPH-dependent 7-cyano-7-deazaguanine reductase</fullName>
        <ecNumber evidence="1">1.7.1.13</ecNumber>
    </recommendedName>
    <alternativeName>
        <fullName evidence="1">7-cyano-7-carbaguanine reductase</fullName>
    </alternativeName>
    <alternativeName>
        <fullName evidence="1">NADPH-dependent nitrile oxidoreductase</fullName>
    </alternativeName>
    <alternativeName>
        <fullName evidence="1">PreQ(0) reductase</fullName>
    </alternativeName>
</protein>
<name>QUEF_ALKMQ</name>
<feature type="chain" id="PRO_1000148661" description="NADPH-dependent 7-cyano-7-deazaguanine reductase">
    <location>
        <begin position="1"/>
        <end position="166"/>
    </location>
</feature>
<feature type="active site" description="Thioimide intermediate" evidence="1">
    <location>
        <position position="57"/>
    </location>
</feature>
<feature type="active site" description="Proton donor" evidence="1">
    <location>
        <position position="64"/>
    </location>
</feature>
<feature type="binding site" evidence="1">
    <location>
        <begin position="79"/>
        <end position="81"/>
    </location>
    <ligand>
        <name>substrate</name>
    </ligand>
</feature>
<feature type="binding site" evidence="1">
    <location>
        <begin position="98"/>
        <end position="99"/>
    </location>
    <ligand>
        <name>substrate</name>
    </ligand>
</feature>